<keyword id="KW-1003">Cell membrane</keyword>
<keyword id="KW-0963">Cytoplasm</keyword>
<keyword id="KW-0472">Membrane</keyword>
<keyword id="KW-1185">Reference proteome</keyword>
<keyword id="KW-0729">SH3-binding</keyword>
<protein>
    <recommendedName>
        <fullName evidence="1">Adapter SH3BGRL</fullName>
    </recommendedName>
    <alternativeName>
        <fullName evidence="3">SH3 domain-binding glutamic acid-rich-like protein 1</fullName>
    </alternativeName>
</protein>
<feature type="chain" id="PRO_0000312642" description="Adapter SH3BGRL">
    <location>
        <begin position="1"/>
        <end position="114"/>
    </location>
</feature>
<feature type="region of interest" description="Required for interaction with HER2" evidence="1">
    <location>
        <begin position="13"/>
        <end position="50"/>
    </location>
</feature>
<feature type="region of interest" description="Required for interaction with PFN1, HER2, and ATG12" evidence="1">
    <location>
        <begin position="54"/>
        <end position="71"/>
    </location>
</feature>
<feature type="short sequence motif" description="SH3-binding" evidence="2">
    <location>
        <begin position="61"/>
        <end position="67"/>
    </location>
</feature>
<accession>Q4R7R5</accession>
<dbReference type="EMBL" id="AB168749">
    <property type="protein sequence ID" value="BAE00857.1"/>
    <property type="molecule type" value="mRNA"/>
</dbReference>
<dbReference type="RefSeq" id="NP_001270646.1">
    <property type="nucleotide sequence ID" value="NM_001283717.1"/>
</dbReference>
<dbReference type="RefSeq" id="XP_015299211.1">
    <property type="nucleotide sequence ID" value="XM_015443725.3"/>
</dbReference>
<dbReference type="SMR" id="Q4R7R5"/>
<dbReference type="STRING" id="9541.ENSMFAP00000015619"/>
<dbReference type="GeneID" id="101865814"/>
<dbReference type="KEGG" id="mcf:101865814"/>
<dbReference type="CTD" id="6451"/>
<dbReference type="VEuPathDB" id="HostDB:ENSMFAG00000031027"/>
<dbReference type="eggNOG" id="KOG4023">
    <property type="taxonomic scope" value="Eukaryota"/>
</dbReference>
<dbReference type="OMA" id="NEKEFMQ"/>
<dbReference type="OrthoDB" id="2176at314294"/>
<dbReference type="Proteomes" id="UP000233100">
    <property type="component" value="Chromosome X"/>
</dbReference>
<dbReference type="GO" id="GO:0005829">
    <property type="term" value="C:cytosol"/>
    <property type="evidence" value="ECO:0007669"/>
    <property type="project" value="UniProtKB-SubCell"/>
</dbReference>
<dbReference type="GO" id="GO:0005886">
    <property type="term" value="C:plasma membrane"/>
    <property type="evidence" value="ECO:0007669"/>
    <property type="project" value="UniProtKB-SubCell"/>
</dbReference>
<dbReference type="GO" id="GO:0017124">
    <property type="term" value="F:SH3 domain binding"/>
    <property type="evidence" value="ECO:0007669"/>
    <property type="project" value="UniProtKB-KW"/>
</dbReference>
<dbReference type="CDD" id="cd03030">
    <property type="entry name" value="GRX_SH3BGR"/>
    <property type="match status" value="1"/>
</dbReference>
<dbReference type="FunFam" id="3.40.30.10:FF:000065">
    <property type="entry name" value="SH3 domain-binding glutamic acid-rich-like protein"/>
    <property type="match status" value="1"/>
</dbReference>
<dbReference type="Gene3D" id="3.40.30.10">
    <property type="entry name" value="Glutaredoxin"/>
    <property type="match status" value="1"/>
</dbReference>
<dbReference type="InterPro" id="IPR006993">
    <property type="entry name" value="Glut_rich_SH3-bd"/>
</dbReference>
<dbReference type="InterPro" id="IPR051033">
    <property type="entry name" value="SH3BGR"/>
</dbReference>
<dbReference type="InterPro" id="IPR036249">
    <property type="entry name" value="Thioredoxin-like_sf"/>
</dbReference>
<dbReference type="PANTHER" id="PTHR12232:SF5">
    <property type="entry name" value="ADAPTER SH3BGRL"/>
    <property type="match status" value="1"/>
</dbReference>
<dbReference type="PANTHER" id="PTHR12232">
    <property type="entry name" value="SH3 DOMAIN-BINDING GLUTAMIC ACID-RICH-LIKE PROTEIN"/>
    <property type="match status" value="1"/>
</dbReference>
<dbReference type="Pfam" id="PF04908">
    <property type="entry name" value="SH3BGR"/>
    <property type="match status" value="1"/>
</dbReference>
<dbReference type="PIRSF" id="PIRSF008142">
    <property type="entry name" value="SH3-bind_E-rich_L"/>
    <property type="match status" value="1"/>
</dbReference>
<dbReference type="SUPFAM" id="SSF52833">
    <property type="entry name" value="Thioredoxin-like"/>
    <property type="match status" value="1"/>
</dbReference>
<proteinExistence type="inferred from homology"/>
<organism>
    <name type="scientific">Macaca fascicularis</name>
    <name type="common">Crab-eating macaque</name>
    <name type="synonym">Cynomolgus monkey</name>
    <dbReference type="NCBI Taxonomy" id="9541"/>
    <lineage>
        <taxon>Eukaryota</taxon>
        <taxon>Metazoa</taxon>
        <taxon>Chordata</taxon>
        <taxon>Craniata</taxon>
        <taxon>Vertebrata</taxon>
        <taxon>Euteleostomi</taxon>
        <taxon>Mammalia</taxon>
        <taxon>Eutheria</taxon>
        <taxon>Euarchontoglires</taxon>
        <taxon>Primates</taxon>
        <taxon>Haplorrhini</taxon>
        <taxon>Catarrhini</taxon>
        <taxon>Cercopithecidae</taxon>
        <taxon>Cercopithecinae</taxon>
        <taxon>Macaca</taxon>
    </lineage>
</organism>
<evidence type="ECO:0000250" key="1">
    <source>
        <dbReference type="UniProtKB" id="O75368"/>
    </source>
</evidence>
<evidence type="ECO:0000255" key="2"/>
<evidence type="ECO:0000305" key="3"/>
<comment type="function">
    <text evidence="1">Appears to function as an adapter protein that bridges proteins together or proteins with mRNAs. May function as a ubiquitin ligase-substrate adapter. Additionally, associates with translating cytoplasmic ribosomes and may promote the expression of specific mRNAs.</text>
</comment>
<comment type="subunit">
    <text evidence="1">Monomer. Interacts with PFN1/Profilin-1. Interacts with ERBB2. Interacts with ATG12. Interacts with BECN1. Interacts with translating ribosomes.</text>
</comment>
<comment type="subcellular location">
    <subcellularLocation>
        <location evidence="1">Cytoplasm</location>
        <location evidence="1">Cytosol</location>
    </subcellularLocation>
    <subcellularLocation>
        <location evidence="1">Cell membrane</location>
    </subcellularLocation>
</comment>
<comment type="domain">
    <text evidence="1">The SH3-binding domain is buried in the tertiary structure, and it therefore unclear whether it directly mediates protein-binding.</text>
</comment>
<comment type="similarity">
    <text evidence="3">Belongs to the SH3BGR family.</text>
</comment>
<sequence>MVIRVYIASSSGSTAIKKKQQDVLGFLEANKIGFEEKDIAANEENRKWMRENVPENSRPATGYPLPPQIFNESQYRGDYDAFFEARENNAVYAFLGLTAPPGSKEAEVQAKQQA</sequence>
<gene>
    <name type="primary">SH3BGRL</name>
    <name type="ORF">QtsA-14566</name>
</gene>
<name>SH3L1_MACFA</name>
<reference key="1">
    <citation type="submission" date="2005-06" db="EMBL/GenBank/DDBJ databases">
        <title>DNA sequences of macaque genes expressed in brain or testis and its evolutionary implications.</title>
        <authorList>
            <consortium name="International consortium for macaque cDNA sequencing and analysis"/>
        </authorList>
    </citation>
    <scope>NUCLEOTIDE SEQUENCE [LARGE SCALE MRNA]</scope>
    <source>
        <tissue>Testis</tissue>
    </source>
</reference>